<reference key="1">
    <citation type="journal article" date="1990" name="Gene">
        <title>Nucleotide sequence of the COR region: a cluster of six genes in the yeast Saccharomyces cerevisiae.</title>
        <authorList>
            <person name="Melnick L."/>
            <person name="Sherman F."/>
        </authorList>
    </citation>
    <scope>PRELIMINARY NUCLEOTIDE SEQUENCE [GENOMIC DNA]</scope>
</reference>
<reference key="2">
    <citation type="journal article" date="1994" name="Yeast">
        <title>Revised nucleotide sequence of the COR region of yeast Saccharomyces cerevisiae chromosome X.</title>
        <authorList>
            <person name="Huang M.-E."/>
            <person name="Manus V."/>
            <person name="Chuat J.-C."/>
            <person name="Galibert F."/>
        </authorList>
    </citation>
    <scope>NUCLEOTIDE SEQUENCE [GENOMIC DNA]</scope>
    <source>
        <strain>ATCC 204508 / S288c</strain>
    </source>
</reference>
<reference key="3">
    <citation type="journal article" date="1996" name="EMBO J.">
        <title>Complete nucleotide sequence of Saccharomyces cerevisiae chromosome X.</title>
        <authorList>
            <person name="Galibert F."/>
            <person name="Alexandraki D."/>
            <person name="Baur A."/>
            <person name="Boles E."/>
            <person name="Chalwatzis N."/>
            <person name="Chuat J.-C."/>
            <person name="Coster F."/>
            <person name="Cziepluch C."/>
            <person name="de Haan M."/>
            <person name="Domdey H."/>
            <person name="Durand P."/>
            <person name="Entian K.-D."/>
            <person name="Gatius M."/>
            <person name="Goffeau A."/>
            <person name="Grivell L.A."/>
            <person name="Hennemann A."/>
            <person name="Herbert C.J."/>
            <person name="Heumann K."/>
            <person name="Hilger F."/>
            <person name="Hollenberg C.P."/>
            <person name="Huang M.-E."/>
            <person name="Jacq C."/>
            <person name="Jauniaux J.-C."/>
            <person name="Katsoulou C."/>
            <person name="Kirchrath L."/>
            <person name="Kleine K."/>
            <person name="Kordes E."/>
            <person name="Koetter P."/>
            <person name="Liebl S."/>
            <person name="Louis E.J."/>
            <person name="Manus V."/>
            <person name="Mewes H.-W."/>
            <person name="Miosga T."/>
            <person name="Obermaier B."/>
            <person name="Perea J."/>
            <person name="Pohl T.M."/>
            <person name="Portetelle D."/>
            <person name="Pujol A."/>
            <person name="Purnelle B."/>
            <person name="Ramezani Rad M."/>
            <person name="Rasmussen S.W."/>
            <person name="Rose M."/>
            <person name="Rossau R."/>
            <person name="Schaaff-Gerstenschlaeger I."/>
            <person name="Smits P.H.M."/>
            <person name="Scarcez T."/>
            <person name="Soriano N."/>
            <person name="To Van D."/>
            <person name="Tzermia M."/>
            <person name="Van Broekhoven A."/>
            <person name="Vandenbol M."/>
            <person name="Wedler H."/>
            <person name="von Wettstein D."/>
            <person name="Wambutt R."/>
            <person name="Zagulski M."/>
            <person name="Zollner A."/>
            <person name="Karpfinger-Hartl L."/>
        </authorList>
    </citation>
    <scope>NUCLEOTIDE SEQUENCE [LARGE SCALE GENOMIC DNA]</scope>
    <source>
        <strain>ATCC 204508 / S288c</strain>
    </source>
</reference>
<reference key="4">
    <citation type="journal article" date="2014" name="G3 (Bethesda)">
        <title>The reference genome sequence of Saccharomyces cerevisiae: Then and now.</title>
        <authorList>
            <person name="Engel S.R."/>
            <person name="Dietrich F.S."/>
            <person name="Fisk D.G."/>
            <person name="Binkley G."/>
            <person name="Balakrishnan R."/>
            <person name="Costanzo M.C."/>
            <person name="Dwight S.S."/>
            <person name="Hitz B.C."/>
            <person name="Karra K."/>
            <person name="Nash R.S."/>
            <person name="Weng S."/>
            <person name="Wong E.D."/>
            <person name="Lloyd P."/>
            <person name="Skrzypek M.S."/>
            <person name="Miyasato S.R."/>
            <person name="Simison M."/>
            <person name="Cherry J.M."/>
        </authorList>
    </citation>
    <scope>GENOME REANNOTATION</scope>
    <source>
        <strain>ATCC 204508 / S288c</strain>
    </source>
</reference>
<reference key="5">
    <citation type="journal article" date="1998" name="Arch. Biochem. Biophys.">
        <title>One of the fumarate reductase isoenzymes from Saccharomyces cerevisiae is encoded by the OSM1 gene.</title>
        <authorList>
            <person name="Muratsubaki H."/>
            <person name="Enomoto K."/>
        </authorList>
    </citation>
    <scope>PROTEIN SEQUENCE OF 33-52 AND 487-501</scope>
    <scope>FUNCTION</scope>
    <scope>CATALYTIC ACTIVITY</scope>
    <scope>COFACTOR</scope>
    <scope>SUBCELLULAR LOCATION</scope>
</reference>
<reference key="6">
    <citation type="journal article" date="1978" name="Genetics">
        <title>Deletions of the iso-1-cytochrome c and adjacent genes of yeast: discovery of the OSM1 gene controlling osmotic sensitivity.</title>
        <authorList>
            <person name="Singh A."/>
            <person name="Sherman F."/>
        </authorList>
    </citation>
    <scope>DISRUPTION PHENOTYPE</scope>
</reference>
<reference key="7">
    <citation type="journal article" date="1998" name="FEMS Microbiol. Lett.">
        <title>Soluble fumarate reductase isoenzymes from Saccharomyces cerevisiae are required for anaerobic growth.</title>
        <authorList>
            <person name="Arikawa Y."/>
            <person name="Enomoto K."/>
            <person name="Muratsubaki H."/>
            <person name="Okazaki M."/>
        </authorList>
    </citation>
    <scope>FUNCTION</scope>
</reference>
<reference key="8">
    <citation type="journal article" date="2003" name="Microbiology">
        <title>Investigation by 13C-NMR and tricarboxylic acid (TCA) deletion mutant analysis of pathways for succinate formation in Saccharomyces cerevisiae during anaerobic fermentation.</title>
        <authorList>
            <person name="Camarasa C."/>
            <person name="Grivet J.P."/>
            <person name="Dequin S."/>
        </authorList>
    </citation>
    <scope>FUNCTION</scope>
</reference>
<reference key="9">
    <citation type="journal article" date="2003" name="Nature">
        <title>Global analysis of protein expression in yeast.</title>
        <authorList>
            <person name="Ghaemmaghami S."/>
            <person name="Huh W.-K."/>
            <person name="Bower K."/>
            <person name="Howson R.W."/>
            <person name="Belle A."/>
            <person name="Dephoure N."/>
            <person name="O'Shea E.K."/>
            <person name="Weissman J.S."/>
        </authorList>
    </citation>
    <scope>LEVEL OF PROTEIN EXPRESSION [LARGE SCALE ANALYSIS]</scope>
</reference>
<reference key="10">
    <citation type="journal article" date="2007" name="Yeast">
        <title>Role in anaerobiosis of the isoenzymes for Saccharomyces cerevisiae fumarate reductase encoded by OSM1 and FRDS1.</title>
        <authorList>
            <person name="Camarasa C."/>
            <person name="Faucet V."/>
            <person name="Dequin S."/>
        </authorList>
    </citation>
    <scope>FUNCTION</scope>
</reference>
<reference key="11">
    <citation type="journal article" date="2008" name="Mol. Cell. Proteomics">
        <title>A multidimensional chromatography technology for in-depth phosphoproteome analysis.</title>
        <authorList>
            <person name="Albuquerque C.P."/>
            <person name="Smolka M.B."/>
            <person name="Payne S.H."/>
            <person name="Bafna V."/>
            <person name="Eng J."/>
            <person name="Zhou H."/>
        </authorList>
    </citation>
    <scope>IDENTIFICATION BY MASS SPECTROMETRY [LARGE SCALE ANALYSIS]</scope>
</reference>
<protein>
    <recommendedName>
        <fullName>Fumarate reductase 2</fullName>
        <shortName>FRDS2</shortName>
        <ecNumber>1.3.1.6</ecNumber>
    </recommendedName>
    <alternativeName>
        <fullName>NADH-dependent fumarate reductase</fullName>
    </alternativeName>
    <alternativeName>
        <fullName>Osmotic sensitivity protein 1</fullName>
    </alternativeName>
    <alternativeName>
        <fullName>Soluble fumarate reductase, mitochondrial isozyme</fullName>
    </alternativeName>
</protein>
<evidence type="ECO:0000250" key="1"/>
<evidence type="ECO:0000255" key="2"/>
<evidence type="ECO:0000269" key="3">
    <source>
    </source>
</evidence>
<evidence type="ECO:0000269" key="4">
    <source>
    </source>
</evidence>
<evidence type="ECO:0000269" key="5">
    <source>
    </source>
</evidence>
<evidence type="ECO:0000269" key="6">
    <source>
    </source>
</evidence>
<evidence type="ECO:0000269" key="7">
    <source>
    </source>
</evidence>
<evidence type="ECO:0000269" key="8">
    <source>
    </source>
</evidence>
<evidence type="ECO:0000305" key="9"/>
<evidence type="ECO:0007829" key="10">
    <source>
        <dbReference type="PDB" id="5GLG"/>
    </source>
</evidence>
<evidence type="ECO:0007829" key="11">
    <source>
        <dbReference type="PDB" id="5ZYN"/>
    </source>
</evidence>
<sequence>MIRSVRRVFIYVSIFVLIIVLKRTLSGTDQTSMKQPVVVIGSGLAGLTTSNRLISKYRIPVVLLDKAASIGGNSIKASSGINGAHTDTQQNLKVMDTPELFLKDTLHSAKGRGVPSLMDKLTKESKSAIRWLQTEFDLKLDLLAQLGGHSVPRTHRSSGKLPPGFEIVQALSKKLKDISSKDSNLVQIMLNSEVVDIELDNQGHVTGVVYMDENGNRKIMKSHHVVFCSGGFGYSKEMLKEYSPNLIHLPTTNGKQTTGDGQKILSKLGAELIDMDQVQVHPTGFIDPNDRENNWKFLAAEALRGLGGILLHPTTGRRFTNELSTRDTVTMEIQSKCPKNDNRALLVMSDKVYENYTNNINFYMSKNLIKKVSINDLIRQYDLQTTASELVTELKSYSDVNTKDTFDRPLIINAFDKDISTESTVYVGEVTPVVHFTMGGVKINEKSQVIKKNSESVLSNGIFAAGEVSGGVHGANRLGGSSLLECVVFGKTAADNIAKLY</sequence>
<gene>
    <name type="primary">OSM1</name>
    <name type="ordered locus">YJR051W</name>
    <name type="ORF">J1659</name>
</gene>
<proteinExistence type="evidence at protein level"/>
<name>OSM1_YEAST</name>
<feature type="transit peptide" description="Mitochondrion" evidence="7">
    <location>
        <begin position="1"/>
        <end position="32"/>
    </location>
</feature>
<feature type="chain" id="PRO_0000158668" description="Fumarate reductase 2">
    <location>
        <begin position="33"/>
        <end position="501"/>
    </location>
</feature>
<feature type="active site" evidence="1">
    <location>
        <position position="281"/>
    </location>
</feature>
<feature type="active site" evidence="1">
    <location>
        <position position="304"/>
    </location>
</feature>
<feature type="binding site" evidence="2">
    <location>
        <begin position="37"/>
        <end position="51"/>
    </location>
    <ligand>
        <name>FAD</name>
        <dbReference type="ChEBI" id="CHEBI:57692"/>
    </ligand>
</feature>
<feature type="sequence conflict" description="In Ref. 1; AAB59346." evidence="9" ref="1">
    <original>LH</original>
    <variation>FD</variation>
    <location>
        <begin position="106"/>
        <end position="107"/>
    </location>
</feature>
<feature type="sequence conflict" description="In Ref. 1; AAB59346." evidence="9" ref="1">
    <original>A</original>
    <variation>AR</variation>
    <location>
        <position position="170"/>
    </location>
</feature>
<feature type="sequence conflict" description="In Ref. 1; AAB59346." evidence="9" ref="1">
    <location>
        <begin position="191"/>
        <end position="192"/>
    </location>
</feature>
<feature type="sequence conflict" description="In Ref. 1; AAB59346." evidence="9" ref="1">
    <original>G</original>
    <variation>S</variation>
    <location>
        <position position="439"/>
    </location>
</feature>
<feature type="sequence conflict" description="In Ref. 1; AAB59346." evidence="9" ref="1">
    <original>SV</original>
    <variation>TL</variation>
    <location>
        <begin position="456"/>
        <end position="457"/>
    </location>
</feature>
<feature type="strand" evidence="11">
    <location>
        <begin position="37"/>
        <end position="40"/>
    </location>
</feature>
<feature type="helix" evidence="11">
    <location>
        <begin position="44"/>
        <end position="57"/>
    </location>
</feature>
<feature type="strand" evidence="11">
    <location>
        <begin position="61"/>
        <end position="64"/>
    </location>
</feature>
<feature type="strand" evidence="11">
    <location>
        <begin position="66"/>
        <end position="70"/>
    </location>
</feature>
<feature type="helix" evidence="11">
    <location>
        <begin position="74"/>
        <end position="76"/>
    </location>
</feature>
<feature type="helix" evidence="11">
    <location>
        <begin position="87"/>
        <end position="91"/>
    </location>
</feature>
<feature type="helix" evidence="11">
    <location>
        <begin position="98"/>
        <end position="109"/>
    </location>
</feature>
<feature type="helix" evidence="11">
    <location>
        <begin position="115"/>
        <end position="123"/>
    </location>
</feature>
<feature type="helix" evidence="11">
    <location>
        <begin position="125"/>
        <end position="136"/>
    </location>
</feature>
<feature type="strand" evidence="11">
    <location>
        <begin position="142"/>
        <end position="144"/>
    </location>
</feature>
<feature type="strand" evidence="11">
    <location>
        <begin position="154"/>
        <end position="156"/>
    </location>
</feature>
<feature type="strand" evidence="11">
    <location>
        <begin position="158"/>
        <end position="161"/>
    </location>
</feature>
<feature type="helix" evidence="11">
    <location>
        <begin position="163"/>
        <end position="181"/>
    </location>
</feature>
<feature type="turn" evidence="11">
    <location>
        <begin position="183"/>
        <end position="185"/>
    </location>
</feature>
<feature type="strand" evidence="11">
    <location>
        <begin position="186"/>
        <end position="189"/>
    </location>
</feature>
<feature type="strand" evidence="11">
    <location>
        <begin position="193"/>
        <end position="199"/>
    </location>
</feature>
<feature type="strand" evidence="11">
    <location>
        <begin position="201"/>
        <end position="203"/>
    </location>
</feature>
<feature type="strand" evidence="11">
    <location>
        <begin position="205"/>
        <end position="211"/>
    </location>
</feature>
<feature type="strand" evidence="11">
    <location>
        <begin position="217"/>
        <end position="221"/>
    </location>
</feature>
<feature type="strand" evidence="11">
    <location>
        <begin position="223"/>
        <end position="227"/>
    </location>
</feature>
<feature type="helix" evidence="11">
    <location>
        <begin position="236"/>
        <end position="242"/>
    </location>
</feature>
<feature type="helix" evidence="11">
    <location>
        <begin position="244"/>
        <end position="246"/>
    </location>
</feature>
<feature type="strand" evidence="11">
    <location>
        <begin position="251"/>
        <end position="253"/>
    </location>
</feature>
<feature type="helix" evidence="11">
    <location>
        <begin position="260"/>
        <end position="267"/>
    </location>
</feature>
<feature type="strand" evidence="11">
    <location>
        <begin position="272"/>
        <end position="274"/>
    </location>
</feature>
<feature type="strand" evidence="11">
    <location>
        <begin position="278"/>
        <end position="285"/>
    </location>
</feature>
<feature type="helix" evidence="11">
    <location>
        <begin position="302"/>
        <end position="305"/>
    </location>
</feature>
<feature type="strand" evidence="11">
    <location>
        <begin position="309"/>
        <end position="311"/>
    </location>
</feature>
<feature type="turn" evidence="11">
    <location>
        <begin position="313"/>
        <end position="315"/>
    </location>
</feature>
<feature type="helix" evidence="11">
    <location>
        <begin position="326"/>
        <end position="336"/>
    </location>
</feature>
<feature type="strand" evidence="10">
    <location>
        <begin position="339"/>
        <end position="341"/>
    </location>
</feature>
<feature type="strand" evidence="11">
    <location>
        <begin position="344"/>
        <end position="348"/>
    </location>
</feature>
<feature type="helix" evidence="11">
    <location>
        <begin position="350"/>
        <end position="354"/>
    </location>
</feature>
<feature type="helix" evidence="11">
    <location>
        <begin position="357"/>
        <end position="365"/>
    </location>
</feature>
<feature type="strand" evidence="11">
    <location>
        <begin position="368"/>
        <end position="373"/>
    </location>
</feature>
<feature type="helix" evidence="11">
    <location>
        <begin position="374"/>
        <end position="380"/>
    </location>
</feature>
<feature type="helix" evidence="11">
    <location>
        <begin position="387"/>
        <end position="398"/>
    </location>
</feature>
<feature type="strand" evidence="11">
    <location>
        <begin position="424"/>
        <end position="437"/>
    </location>
</feature>
<feature type="strand" evidence="11">
    <location>
        <begin position="440"/>
        <end position="443"/>
    </location>
</feature>
<feature type="strand" evidence="11">
    <location>
        <begin position="447"/>
        <end position="451"/>
    </location>
</feature>
<feature type="strand" evidence="11">
    <location>
        <begin position="454"/>
        <end position="458"/>
    </location>
</feature>
<feature type="strand" evidence="11">
    <location>
        <begin position="462"/>
        <end position="464"/>
    </location>
</feature>
<feature type="strand" evidence="11">
    <location>
        <begin position="469"/>
        <end position="473"/>
    </location>
</feature>
<feature type="helix" evidence="11">
    <location>
        <begin position="481"/>
        <end position="500"/>
    </location>
</feature>
<accession>P21375</accession>
<accession>D6VWM2</accession>
<organism>
    <name type="scientific">Saccharomyces cerevisiae (strain ATCC 204508 / S288c)</name>
    <name type="common">Baker's yeast</name>
    <dbReference type="NCBI Taxonomy" id="559292"/>
    <lineage>
        <taxon>Eukaryota</taxon>
        <taxon>Fungi</taxon>
        <taxon>Dikarya</taxon>
        <taxon>Ascomycota</taxon>
        <taxon>Saccharomycotina</taxon>
        <taxon>Saccharomycetes</taxon>
        <taxon>Saccharomycetales</taxon>
        <taxon>Saccharomycetaceae</taxon>
        <taxon>Saccharomyces</taxon>
    </lineage>
</organism>
<comment type="function">
    <text evidence="3 5 7 8">Irreversibly catalyzes the reduction of fumarate to succinate. Together with the second isozyme of soluble fumarate reductase (FRD1), essential for anaerobic growth. Involved in maintaining redox balance during oxygen deficiency conditions. Reduction of fumarate is the main source of succinate during fermentation, and under anaerobic conditions, the formation of succinate is strictly required for the reoxidation of FADH(2).</text>
</comment>
<comment type="catalytic activity">
    <reaction evidence="7">
        <text>succinate + NAD(+) = fumarate + NADH + H(+)</text>
        <dbReference type="Rhea" id="RHEA:18281"/>
        <dbReference type="ChEBI" id="CHEBI:15378"/>
        <dbReference type="ChEBI" id="CHEBI:29806"/>
        <dbReference type="ChEBI" id="CHEBI:30031"/>
        <dbReference type="ChEBI" id="CHEBI:57540"/>
        <dbReference type="ChEBI" id="CHEBI:57945"/>
        <dbReference type="EC" id="1.3.1.6"/>
    </reaction>
</comment>
<comment type="cofactor">
    <cofactor evidence="7">
        <name>FAD</name>
        <dbReference type="ChEBI" id="CHEBI:57692"/>
    </cofactor>
    <text evidence="7">Binds 1 FAD per monomer.</text>
</comment>
<comment type="subcellular location">
    <subcellularLocation>
        <location evidence="7">Mitochondrion</location>
    </subcellularLocation>
</comment>
<comment type="disruption phenotype">
    <text evidence="6">Causes increased sensitivity to hypertonic growth medium.</text>
</comment>
<comment type="miscellaneous">
    <text evidence="4">Present with 432 molecules/cell in log phase SD medium.</text>
</comment>
<comment type="similarity">
    <text evidence="9">Belongs to the FAD-dependent oxidoreductase 2 family. FRD/SDH subfamily.</text>
</comment>
<comment type="sequence caution" evidence="9">
    <conflict type="frameshift">
        <sequence resource="EMBL-CDS" id="AAB59346"/>
    </conflict>
</comment>
<keyword id="KW-0002">3D-structure</keyword>
<keyword id="KW-0903">Direct protein sequencing</keyword>
<keyword id="KW-0274">FAD</keyword>
<keyword id="KW-0285">Flavoprotein</keyword>
<keyword id="KW-0496">Mitochondrion</keyword>
<keyword id="KW-0520">NAD</keyword>
<keyword id="KW-0560">Oxidoreductase</keyword>
<keyword id="KW-1185">Reference proteome</keyword>
<keyword id="KW-0809">Transit peptide</keyword>
<dbReference type="EC" id="1.3.1.6"/>
<dbReference type="EMBL" id="M37696">
    <property type="protein sequence ID" value="AAB59346.1"/>
    <property type="status" value="ALT_FRAME"/>
    <property type="molecule type" value="Genomic_DNA"/>
</dbReference>
<dbReference type="EMBL" id="L26347">
    <property type="protein sequence ID" value="AAA62859.1"/>
    <property type="molecule type" value="Genomic_DNA"/>
</dbReference>
<dbReference type="EMBL" id="L36344">
    <property type="protein sequence ID" value="AAA88754.1"/>
    <property type="molecule type" value="Genomic_DNA"/>
</dbReference>
<dbReference type="EMBL" id="Z49551">
    <property type="protein sequence ID" value="CAA89579.1"/>
    <property type="molecule type" value="Genomic_DNA"/>
</dbReference>
<dbReference type="EMBL" id="BK006943">
    <property type="protein sequence ID" value="DAA08838.1"/>
    <property type="molecule type" value="Genomic_DNA"/>
</dbReference>
<dbReference type="PIR" id="S46591">
    <property type="entry name" value="S46591"/>
</dbReference>
<dbReference type="RefSeq" id="NP_012585.1">
    <property type="nucleotide sequence ID" value="NM_001181709.1"/>
</dbReference>
<dbReference type="PDB" id="5GLG">
    <property type="method" value="X-ray"/>
    <property type="resolution" value="1.80 A"/>
    <property type="chains" value="A=32-501"/>
</dbReference>
<dbReference type="PDB" id="5ZYN">
    <property type="method" value="X-ray"/>
    <property type="resolution" value="1.75 A"/>
    <property type="chains" value="B=32-501"/>
</dbReference>
<dbReference type="PDB" id="6KU6">
    <property type="method" value="X-ray"/>
    <property type="resolution" value="2.01 A"/>
    <property type="chains" value="B/H=32-501"/>
</dbReference>
<dbReference type="PDBsum" id="5GLG"/>
<dbReference type="PDBsum" id="5ZYN"/>
<dbReference type="PDBsum" id="6KU6"/>
<dbReference type="SMR" id="P21375"/>
<dbReference type="BioGRID" id="33804">
    <property type="interactions" value="90"/>
</dbReference>
<dbReference type="DIP" id="DIP-5426N"/>
<dbReference type="FunCoup" id="P21375">
    <property type="interactions" value="69"/>
</dbReference>
<dbReference type="IntAct" id="P21375">
    <property type="interactions" value="5"/>
</dbReference>
<dbReference type="MINT" id="P21375"/>
<dbReference type="STRING" id="4932.YJR051W"/>
<dbReference type="iPTMnet" id="P21375"/>
<dbReference type="PaxDb" id="4932-YJR051W"/>
<dbReference type="PeptideAtlas" id="P21375"/>
<dbReference type="EnsemblFungi" id="YJR051W_mRNA">
    <property type="protein sequence ID" value="YJR051W"/>
    <property type="gene ID" value="YJR051W"/>
</dbReference>
<dbReference type="GeneID" id="853510"/>
<dbReference type="KEGG" id="sce:YJR051W"/>
<dbReference type="AGR" id="SGD:S000003812"/>
<dbReference type="SGD" id="S000003812">
    <property type="gene designation" value="OSM1"/>
</dbReference>
<dbReference type="VEuPathDB" id="FungiDB:YJR051W"/>
<dbReference type="eggNOG" id="KOG2404">
    <property type="taxonomic scope" value="Eukaryota"/>
</dbReference>
<dbReference type="GeneTree" id="ENSGT00940000176615"/>
<dbReference type="HOGENOM" id="CLU_011398_4_5_1"/>
<dbReference type="InParanoid" id="P21375"/>
<dbReference type="OMA" id="LRQWDIQ"/>
<dbReference type="OrthoDB" id="10254877at2759"/>
<dbReference type="BioCyc" id="MetaCyc:YJR051W-MONOMER"/>
<dbReference type="BioCyc" id="YEAST:YJR051W-MONOMER"/>
<dbReference type="BioGRID-ORCS" id="853510">
    <property type="hits" value="6 hits in 10 CRISPR screens"/>
</dbReference>
<dbReference type="PRO" id="PR:P21375"/>
<dbReference type="Proteomes" id="UP000002311">
    <property type="component" value="Chromosome X"/>
</dbReference>
<dbReference type="RNAct" id="P21375">
    <property type="molecule type" value="protein"/>
</dbReference>
<dbReference type="GO" id="GO:0005737">
    <property type="term" value="C:cytoplasm"/>
    <property type="evidence" value="ECO:0000318"/>
    <property type="project" value="GO_Central"/>
</dbReference>
<dbReference type="GO" id="GO:0005783">
    <property type="term" value="C:endoplasmic reticulum"/>
    <property type="evidence" value="ECO:0000314"/>
    <property type="project" value="SGD"/>
</dbReference>
<dbReference type="GO" id="GO:0005739">
    <property type="term" value="C:mitochondrion"/>
    <property type="evidence" value="ECO:0000314"/>
    <property type="project" value="SGD"/>
</dbReference>
<dbReference type="GO" id="GO:0010181">
    <property type="term" value="F:FMN binding"/>
    <property type="evidence" value="ECO:0007669"/>
    <property type="project" value="InterPro"/>
</dbReference>
<dbReference type="GO" id="GO:0016156">
    <property type="term" value="F:fumarate reductase (NADH) activity"/>
    <property type="evidence" value="ECO:0000314"/>
    <property type="project" value="SGD"/>
</dbReference>
<dbReference type="GO" id="GO:0046443">
    <property type="term" value="P:FAD metabolic process"/>
    <property type="evidence" value="ECO:0000315"/>
    <property type="project" value="SGD"/>
</dbReference>
<dbReference type="GO" id="GO:0034975">
    <property type="term" value="P:protein folding in endoplasmic reticulum"/>
    <property type="evidence" value="ECO:0000315"/>
    <property type="project" value="SGD"/>
</dbReference>
<dbReference type="FunFam" id="3.90.700.10:FF:000007">
    <property type="entry name" value="NADH-dependent fumarate reductase"/>
    <property type="match status" value="1"/>
</dbReference>
<dbReference type="Gene3D" id="3.50.50.60">
    <property type="entry name" value="FAD/NAD(P)-binding domain"/>
    <property type="match status" value="1"/>
</dbReference>
<dbReference type="Gene3D" id="3.90.700.10">
    <property type="entry name" value="Succinate dehydrogenase/fumarate reductase flavoprotein, catalytic domain"/>
    <property type="match status" value="1"/>
</dbReference>
<dbReference type="InterPro" id="IPR003953">
    <property type="entry name" value="FAD-dep_OxRdtase_2_FAD-bd"/>
</dbReference>
<dbReference type="InterPro" id="IPR050315">
    <property type="entry name" value="FAD-oxidoreductase_2"/>
</dbReference>
<dbReference type="InterPro" id="IPR036188">
    <property type="entry name" value="FAD/NAD-bd_sf"/>
</dbReference>
<dbReference type="InterPro" id="IPR010960">
    <property type="entry name" value="Flavocytochrome_c"/>
</dbReference>
<dbReference type="InterPro" id="IPR027477">
    <property type="entry name" value="Succ_DH/fumarate_Rdtase_cat_sf"/>
</dbReference>
<dbReference type="NCBIfam" id="TIGR01813">
    <property type="entry name" value="flavo_cyto_c"/>
    <property type="match status" value="1"/>
</dbReference>
<dbReference type="PANTHER" id="PTHR43400:SF7">
    <property type="entry name" value="FAD-DEPENDENT OXIDOREDUCTASE 2 FAD BINDING DOMAIN-CONTAINING PROTEIN"/>
    <property type="match status" value="1"/>
</dbReference>
<dbReference type="PANTHER" id="PTHR43400">
    <property type="entry name" value="FUMARATE REDUCTASE"/>
    <property type="match status" value="1"/>
</dbReference>
<dbReference type="Pfam" id="PF00890">
    <property type="entry name" value="FAD_binding_2"/>
    <property type="match status" value="1"/>
</dbReference>
<dbReference type="SUPFAM" id="SSF51905">
    <property type="entry name" value="FAD/NAD(P)-binding domain"/>
    <property type="match status" value="1"/>
</dbReference>
<dbReference type="SUPFAM" id="SSF56425">
    <property type="entry name" value="Succinate dehydrogenase/fumarate reductase flavoprotein, catalytic domain"/>
    <property type="match status" value="1"/>
</dbReference>